<accession>Q0WDE1</accession>
<accession>Q74SY9</accession>
<accession>Q8D0U7</accession>
<evidence type="ECO:0000255" key="1">
    <source>
        <dbReference type="HAMAP-Rule" id="MF_02125"/>
    </source>
</evidence>
<evidence type="ECO:0000305" key="2"/>
<dbReference type="EC" id="2.1.1.298" evidence="1"/>
<dbReference type="EMBL" id="AL590842">
    <property type="protein sequence ID" value="CAL21369.1"/>
    <property type="molecule type" value="Genomic_DNA"/>
</dbReference>
<dbReference type="EMBL" id="AE009952">
    <property type="protein sequence ID" value="AAM85153.1"/>
    <property type="status" value="ALT_INIT"/>
    <property type="molecule type" value="Genomic_DNA"/>
</dbReference>
<dbReference type="EMBL" id="AE017042">
    <property type="protein sequence ID" value="AAS62618.1"/>
    <property type="status" value="ALT_INIT"/>
    <property type="molecule type" value="Genomic_DNA"/>
</dbReference>
<dbReference type="PIR" id="AF0335">
    <property type="entry name" value="AF0335"/>
</dbReference>
<dbReference type="RefSeq" id="WP_002209710.1">
    <property type="nucleotide sequence ID" value="NZ_WUCM01000012.1"/>
</dbReference>
<dbReference type="RefSeq" id="YP_002347697.1">
    <property type="nucleotide sequence ID" value="NC_003143.1"/>
</dbReference>
<dbReference type="SMR" id="Q0WDE1"/>
<dbReference type="IntAct" id="Q0WDE1">
    <property type="interactions" value="4"/>
</dbReference>
<dbReference type="STRING" id="214092.YPO2750"/>
<dbReference type="PaxDb" id="214092-YPO2750"/>
<dbReference type="DNASU" id="1146531"/>
<dbReference type="EnsemblBacteria" id="AAS62618">
    <property type="protein sequence ID" value="AAS62618"/>
    <property type="gene ID" value="YP_2413"/>
</dbReference>
<dbReference type="GeneID" id="57975939"/>
<dbReference type="KEGG" id="ype:YPO2750"/>
<dbReference type="KEGG" id="ypk:y1584"/>
<dbReference type="KEGG" id="ypm:YP_2413"/>
<dbReference type="PATRIC" id="fig|1028802.3.peg.1708"/>
<dbReference type="eggNOG" id="COG2890">
    <property type="taxonomic scope" value="Bacteria"/>
</dbReference>
<dbReference type="HOGENOM" id="CLU_018398_5_1_6"/>
<dbReference type="OMA" id="IYYGHGT"/>
<dbReference type="OrthoDB" id="9800643at2"/>
<dbReference type="Proteomes" id="UP000000815">
    <property type="component" value="Chromosome"/>
</dbReference>
<dbReference type="Proteomes" id="UP000001019">
    <property type="component" value="Chromosome"/>
</dbReference>
<dbReference type="Proteomes" id="UP000002490">
    <property type="component" value="Chromosome"/>
</dbReference>
<dbReference type="GO" id="GO:0005829">
    <property type="term" value="C:cytosol"/>
    <property type="evidence" value="ECO:0000318"/>
    <property type="project" value="GO_Central"/>
</dbReference>
<dbReference type="GO" id="GO:0003676">
    <property type="term" value="F:nucleic acid binding"/>
    <property type="evidence" value="ECO:0007669"/>
    <property type="project" value="InterPro"/>
</dbReference>
<dbReference type="GO" id="GO:0036009">
    <property type="term" value="F:protein-glutamine N-methyltransferase activity"/>
    <property type="evidence" value="ECO:0000318"/>
    <property type="project" value="GO_Central"/>
</dbReference>
<dbReference type="GO" id="GO:0032259">
    <property type="term" value="P:methylation"/>
    <property type="evidence" value="ECO:0007669"/>
    <property type="project" value="UniProtKB-KW"/>
</dbReference>
<dbReference type="CDD" id="cd02440">
    <property type="entry name" value="AdoMet_MTases"/>
    <property type="match status" value="1"/>
</dbReference>
<dbReference type="FunFam" id="1.10.8.10:FF:000022">
    <property type="entry name" value="50S ribosomal protein L3 glutamine methyltransferase"/>
    <property type="match status" value="1"/>
</dbReference>
<dbReference type="FunFam" id="3.40.50.150:FF:000042">
    <property type="entry name" value="50S ribosomal protein L3 glutamine methyltransferase"/>
    <property type="match status" value="1"/>
</dbReference>
<dbReference type="Gene3D" id="3.40.50.150">
    <property type="entry name" value="Vaccinia Virus protein VP39"/>
    <property type="match status" value="1"/>
</dbReference>
<dbReference type="HAMAP" id="MF_02125">
    <property type="entry name" value="L3_methyltr_PrmB"/>
    <property type="match status" value="1"/>
</dbReference>
<dbReference type="InterPro" id="IPR002052">
    <property type="entry name" value="DNA_methylase_N6_adenine_CS"/>
</dbReference>
<dbReference type="InterPro" id="IPR004556">
    <property type="entry name" value="HemK-like"/>
</dbReference>
<dbReference type="InterPro" id="IPR017127">
    <property type="entry name" value="Ribosome_uL3_MTase"/>
</dbReference>
<dbReference type="InterPro" id="IPR029063">
    <property type="entry name" value="SAM-dependent_MTases_sf"/>
</dbReference>
<dbReference type="InterPro" id="IPR007848">
    <property type="entry name" value="Small_mtfrase_dom"/>
</dbReference>
<dbReference type="NCBIfam" id="TIGR00536">
    <property type="entry name" value="hemK_fam"/>
    <property type="match status" value="1"/>
</dbReference>
<dbReference type="NCBIfam" id="TIGR03533">
    <property type="entry name" value="L3_gln_methyl"/>
    <property type="match status" value="1"/>
</dbReference>
<dbReference type="PANTHER" id="PTHR47806">
    <property type="entry name" value="50S RIBOSOMAL PROTEIN L3 GLUTAMINE METHYLTRANSFERASE"/>
    <property type="match status" value="1"/>
</dbReference>
<dbReference type="PANTHER" id="PTHR47806:SF1">
    <property type="entry name" value="RIBOSOMAL PROTEIN UL3 GLUTAMINE METHYLTRANSFERASE"/>
    <property type="match status" value="1"/>
</dbReference>
<dbReference type="Pfam" id="PF05175">
    <property type="entry name" value="MTS"/>
    <property type="match status" value="1"/>
</dbReference>
<dbReference type="PIRSF" id="PIRSF037167">
    <property type="entry name" value="Mtase_YfcB_prd"/>
    <property type="match status" value="1"/>
</dbReference>
<dbReference type="SUPFAM" id="SSF53335">
    <property type="entry name" value="S-adenosyl-L-methionine-dependent methyltransferases"/>
    <property type="match status" value="1"/>
</dbReference>
<gene>
    <name evidence="1" type="primary">prmB</name>
    <name type="ordered locus">YPO2750</name>
    <name type="ordered locus">y1584</name>
    <name type="ordered locus">YP_2413</name>
</gene>
<reference key="1">
    <citation type="journal article" date="2001" name="Nature">
        <title>Genome sequence of Yersinia pestis, the causative agent of plague.</title>
        <authorList>
            <person name="Parkhill J."/>
            <person name="Wren B.W."/>
            <person name="Thomson N.R."/>
            <person name="Titball R.W."/>
            <person name="Holden M.T.G."/>
            <person name="Prentice M.B."/>
            <person name="Sebaihia M."/>
            <person name="James K.D."/>
            <person name="Churcher C.M."/>
            <person name="Mungall K.L."/>
            <person name="Baker S."/>
            <person name="Basham D."/>
            <person name="Bentley S.D."/>
            <person name="Brooks K."/>
            <person name="Cerdeno-Tarraga A.-M."/>
            <person name="Chillingworth T."/>
            <person name="Cronin A."/>
            <person name="Davies R.M."/>
            <person name="Davis P."/>
            <person name="Dougan G."/>
            <person name="Feltwell T."/>
            <person name="Hamlin N."/>
            <person name="Holroyd S."/>
            <person name="Jagels K."/>
            <person name="Karlyshev A.V."/>
            <person name="Leather S."/>
            <person name="Moule S."/>
            <person name="Oyston P.C.F."/>
            <person name="Quail M.A."/>
            <person name="Rutherford K.M."/>
            <person name="Simmonds M."/>
            <person name="Skelton J."/>
            <person name="Stevens K."/>
            <person name="Whitehead S."/>
            <person name="Barrell B.G."/>
        </authorList>
    </citation>
    <scope>NUCLEOTIDE SEQUENCE [LARGE SCALE GENOMIC DNA]</scope>
    <source>
        <strain>CO-92 / Biovar Orientalis</strain>
    </source>
</reference>
<reference key="2">
    <citation type="journal article" date="2002" name="J. Bacteriol.">
        <title>Genome sequence of Yersinia pestis KIM.</title>
        <authorList>
            <person name="Deng W."/>
            <person name="Burland V."/>
            <person name="Plunkett G. III"/>
            <person name="Boutin A."/>
            <person name="Mayhew G.F."/>
            <person name="Liss P."/>
            <person name="Perna N.T."/>
            <person name="Rose D.J."/>
            <person name="Mau B."/>
            <person name="Zhou S."/>
            <person name="Schwartz D.C."/>
            <person name="Fetherston J.D."/>
            <person name="Lindler L.E."/>
            <person name="Brubaker R.R."/>
            <person name="Plano G.V."/>
            <person name="Straley S.C."/>
            <person name="McDonough K.A."/>
            <person name="Nilles M.L."/>
            <person name="Matson J.S."/>
            <person name="Blattner F.R."/>
            <person name="Perry R.D."/>
        </authorList>
    </citation>
    <scope>NUCLEOTIDE SEQUENCE [LARGE SCALE GENOMIC DNA]</scope>
    <source>
        <strain>KIM10+ / Biovar Mediaevalis</strain>
    </source>
</reference>
<reference key="3">
    <citation type="journal article" date="2004" name="DNA Res.">
        <title>Complete genome sequence of Yersinia pestis strain 91001, an isolate avirulent to humans.</title>
        <authorList>
            <person name="Song Y."/>
            <person name="Tong Z."/>
            <person name="Wang J."/>
            <person name="Wang L."/>
            <person name="Guo Z."/>
            <person name="Han Y."/>
            <person name="Zhang J."/>
            <person name="Pei D."/>
            <person name="Zhou D."/>
            <person name="Qin H."/>
            <person name="Pang X."/>
            <person name="Han Y."/>
            <person name="Zhai J."/>
            <person name="Li M."/>
            <person name="Cui B."/>
            <person name="Qi Z."/>
            <person name="Jin L."/>
            <person name="Dai R."/>
            <person name="Chen F."/>
            <person name="Li S."/>
            <person name="Ye C."/>
            <person name="Du Z."/>
            <person name="Lin W."/>
            <person name="Wang J."/>
            <person name="Yu J."/>
            <person name="Yang H."/>
            <person name="Wang J."/>
            <person name="Huang P."/>
            <person name="Yang R."/>
        </authorList>
    </citation>
    <scope>NUCLEOTIDE SEQUENCE [LARGE SCALE GENOMIC DNA]</scope>
    <source>
        <strain>91001 / Biovar Mediaevalis</strain>
    </source>
</reference>
<sequence length="310" mass="35296">MDKIFVDEAVNELHTIQDMLRWTVSRFNAANIFYGHGTDNPWDEAVQLVFPSLFLPLDIPEDIRSSRLTSSERHRIVERVIRRVNERIPVAYLTNKAWFCGMEYYVDERVLVPRSPIGELIENRFDGLIHHQPNHILDMCTGSGCIAIACAYAFPDAEVDAVDISNDVLAVTEHNIQQHGMEHQVTPIRSDLFRDLPPIKYDLIVTNPPYVDAEDMADLPQEFRFEPELGLAAGSDGLKLARRILACAPDFLQDDGVLICEVGNSMVHLMDQYPDVPFTWLEFEKGGDGVFMLTKQQLIDCAAHFSMYRD</sequence>
<comment type="function">
    <text evidence="1">Methylates large ribosomal subunit protein uL3 on a specific glutamine residue.</text>
</comment>
<comment type="catalytic activity">
    <reaction evidence="1">
        <text>L-glutaminyl-[ribosomal protein uL3] + S-adenosyl-L-methionine = N(5)-methyl-L-glutaminyl-[ribosomal protein uL3] + S-adenosyl-L-homocysteine + H(+)</text>
        <dbReference type="Rhea" id="RHEA:45020"/>
        <dbReference type="Rhea" id="RHEA-COMP:11063"/>
        <dbReference type="Rhea" id="RHEA-COMP:11064"/>
        <dbReference type="ChEBI" id="CHEBI:15378"/>
        <dbReference type="ChEBI" id="CHEBI:30011"/>
        <dbReference type="ChEBI" id="CHEBI:57856"/>
        <dbReference type="ChEBI" id="CHEBI:59789"/>
        <dbReference type="ChEBI" id="CHEBI:61891"/>
        <dbReference type="EC" id="2.1.1.298"/>
    </reaction>
</comment>
<comment type="similarity">
    <text evidence="1">Belongs to the protein N5-glutamine methyltransferase family. PrmB subfamily.</text>
</comment>
<comment type="sequence caution" evidence="2">
    <conflict type="erroneous initiation">
        <sequence resource="EMBL-CDS" id="AAM85153"/>
    </conflict>
    <text>Extended N-terminus.</text>
</comment>
<comment type="sequence caution" evidence="2">
    <conflict type="erroneous initiation">
        <sequence resource="EMBL-CDS" id="AAS62618"/>
    </conflict>
    <text>Extended N-terminus.</text>
</comment>
<name>PRMB_YERPE</name>
<proteinExistence type="inferred from homology"/>
<protein>
    <recommendedName>
        <fullName evidence="1">Ribosomal protein uL3 glutamine methyltransferase</fullName>
        <shortName evidence="1">uL3 MTase</shortName>
        <ecNumber evidence="1">2.1.1.298</ecNumber>
    </recommendedName>
    <alternativeName>
        <fullName evidence="1">N5-glutamine methyltransferase PrmB</fullName>
    </alternativeName>
</protein>
<keyword id="KW-0489">Methyltransferase</keyword>
<keyword id="KW-1185">Reference proteome</keyword>
<keyword id="KW-0949">S-adenosyl-L-methionine</keyword>
<keyword id="KW-0808">Transferase</keyword>
<feature type="chain" id="PRO_0000414185" description="Ribosomal protein uL3 glutamine methyltransferase">
    <location>
        <begin position="1"/>
        <end position="310"/>
    </location>
</feature>
<organism>
    <name type="scientific">Yersinia pestis</name>
    <dbReference type="NCBI Taxonomy" id="632"/>
    <lineage>
        <taxon>Bacteria</taxon>
        <taxon>Pseudomonadati</taxon>
        <taxon>Pseudomonadota</taxon>
        <taxon>Gammaproteobacteria</taxon>
        <taxon>Enterobacterales</taxon>
        <taxon>Yersiniaceae</taxon>
        <taxon>Yersinia</taxon>
    </lineage>
</organism>